<gene>
    <name type="ordered locus">MIMI_L39</name>
</gene>
<dbReference type="EMBL" id="AY653733">
    <property type="protein sequence ID" value="AAV50314.1"/>
    <property type="molecule type" value="Genomic_DNA"/>
</dbReference>
<dbReference type="KEGG" id="vg:9924622"/>
<dbReference type="Proteomes" id="UP000001134">
    <property type="component" value="Genome"/>
</dbReference>
<proteinExistence type="inferred from homology"/>
<organismHost>
    <name type="scientific">Acanthamoeba polyphaga</name>
    <name type="common">Amoeba</name>
    <dbReference type="NCBI Taxonomy" id="5757"/>
</organismHost>
<organism>
    <name type="scientific">Acanthamoeba polyphaga mimivirus</name>
    <name type="common">APMV</name>
    <dbReference type="NCBI Taxonomy" id="212035"/>
    <lineage>
        <taxon>Viruses</taxon>
        <taxon>Varidnaviria</taxon>
        <taxon>Bamfordvirae</taxon>
        <taxon>Nucleocytoviricota</taxon>
        <taxon>Megaviricetes</taxon>
        <taxon>Imitervirales</taxon>
        <taxon>Mimiviridae</taxon>
        <taxon>Megamimivirinae</taxon>
        <taxon>Mimivirus</taxon>
        <taxon>Mimivirus bradfordmassiliense</taxon>
    </lineage>
</organism>
<protein>
    <recommendedName>
        <fullName>Uncharacterized protein L39</fullName>
    </recommendedName>
</protein>
<comment type="similarity">
    <text evidence="1">Belongs to the mimivirus L39/R874 family.</text>
</comment>
<name>YL039_MIMIV</name>
<evidence type="ECO:0000305" key="1"/>
<sequence length="174" mass="20727">MSWLCQKSINVFLSEEYLDKVSRYMNADKLLEENFEITQQQITVHCDCDHGDWQFCECDLEPLDQMEALDLTDIVRIWTNGGILSPKSLENLHDWIWYRINDPDNDPTDPEYELDWDNANRKILIDCDSFGVPQYQNFSVSVRGYLFHIHELEVIRPHIVDFLVHRKPVIVYYQ</sequence>
<accession>Q5UPB1</accession>
<feature type="chain" id="PRO_0000071189" description="Uncharacterized protein L39">
    <location>
        <begin position="1"/>
        <end position="174"/>
    </location>
</feature>
<reference key="1">
    <citation type="journal article" date="2004" name="Science">
        <title>The 1.2-megabase genome sequence of Mimivirus.</title>
        <authorList>
            <person name="Raoult D."/>
            <person name="Audic S."/>
            <person name="Robert C."/>
            <person name="Abergel C."/>
            <person name="Renesto P."/>
            <person name="Ogata H."/>
            <person name="La Scola B."/>
            <person name="Susan M."/>
            <person name="Claverie J.-M."/>
        </authorList>
    </citation>
    <scope>NUCLEOTIDE SEQUENCE [LARGE SCALE GENOMIC DNA]</scope>
    <source>
        <strain>Rowbotham-Bradford</strain>
    </source>
</reference>
<keyword id="KW-1185">Reference proteome</keyword>